<accession>O13800</accession>
<proteinExistence type="evidence at protein level"/>
<dbReference type="EMBL" id="CU329670">
    <property type="protein sequence ID" value="CAB11212.1"/>
    <property type="molecule type" value="Genomic_DNA"/>
</dbReference>
<dbReference type="PIR" id="T37869">
    <property type="entry name" value="T37869"/>
</dbReference>
<dbReference type="RefSeq" id="NP_593573.1">
    <property type="nucleotide sequence ID" value="NM_001019005.2"/>
</dbReference>
<dbReference type="SMR" id="O13800"/>
<dbReference type="BioGRID" id="278763">
    <property type="interactions" value="18"/>
</dbReference>
<dbReference type="FunCoup" id="O13800">
    <property type="interactions" value="2"/>
</dbReference>
<dbReference type="IntAct" id="O13800">
    <property type="interactions" value="2"/>
</dbReference>
<dbReference type="MINT" id="O13800"/>
<dbReference type="STRING" id="284812.O13800"/>
<dbReference type="iPTMnet" id="O13800"/>
<dbReference type="PaxDb" id="4896-SPAC17H9.03c.1"/>
<dbReference type="EnsemblFungi" id="SPAC17H9.03c.1">
    <property type="protein sequence ID" value="SPAC17H9.03c.1:pep"/>
    <property type="gene ID" value="SPAC17H9.03c"/>
</dbReference>
<dbReference type="GeneID" id="2542295"/>
<dbReference type="KEGG" id="spo:2542295"/>
<dbReference type="PomBase" id="SPAC17H9.03c">
    <property type="gene designation" value="rdl1"/>
</dbReference>
<dbReference type="VEuPathDB" id="FungiDB:SPAC17H9.03c"/>
<dbReference type="eggNOG" id="KOG1433">
    <property type="taxonomic scope" value="Eukaryota"/>
</dbReference>
<dbReference type="HOGENOM" id="CLU_1300317_0_0_1"/>
<dbReference type="InParanoid" id="O13800"/>
<dbReference type="OMA" id="YAHASMM"/>
<dbReference type="PRO" id="PR:O13800"/>
<dbReference type="Proteomes" id="UP000002485">
    <property type="component" value="Chromosome I"/>
</dbReference>
<dbReference type="GO" id="GO:0005737">
    <property type="term" value="C:cytoplasm"/>
    <property type="evidence" value="ECO:0007005"/>
    <property type="project" value="PomBase"/>
</dbReference>
<dbReference type="GO" id="GO:0005829">
    <property type="term" value="C:cytosol"/>
    <property type="evidence" value="ECO:0007005"/>
    <property type="project" value="PomBase"/>
</dbReference>
<dbReference type="GO" id="GO:0005634">
    <property type="term" value="C:nucleus"/>
    <property type="evidence" value="ECO:0000314"/>
    <property type="project" value="PomBase"/>
</dbReference>
<dbReference type="GO" id="GO:0097196">
    <property type="term" value="C:Shu complex"/>
    <property type="evidence" value="ECO:0000266"/>
    <property type="project" value="PomBase"/>
</dbReference>
<dbReference type="GO" id="GO:0007131">
    <property type="term" value="P:reciprocal meiotic recombination"/>
    <property type="evidence" value="ECO:0000315"/>
    <property type="project" value="PomBase"/>
</dbReference>
<dbReference type="GO" id="GO:0000725">
    <property type="term" value="P:recombinational repair"/>
    <property type="evidence" value="ECO:0000315"/>
    <property type="project" value="PomBase"/>
</dbReference>
<dbReference type="Gene3D" id="3.40.50.300">
    <property type="entry name" value="P-loop containing nucleotide triphosphate hydrolases"/>
    <property type="match status" value="1"/>
</dbReference>
<dbReference type="InterPro" id="IPR051988">
    <property type="entry name" value="HRR_RAD51_Paralog"/>
</dbReference>
<dbReference type="InterPro" id="IPR027417">
    <property type="entry name" value="P-loop_NTPase"/>
</dbReference>
<dbReference type="PANTHER" id="PTHR46457">
    <property type="entry name" value="DNA REPAIR PROTEIN RAD51 HOMOLOG 4"/>
    <property type="match status" value="1"/>
</dbReference>
<dbReference type="PANTHER" id="PTHR46457:SF1">
    <property type="entry name" value="DNA REPAIR PROTEIN RAD51 HOMOLOG 4"/>
    <property type="match status" value="1"/>
</dbReference>
<reference key="1">
    <citation type="journal article" date="2002" name="Nature">
        <title>The genome sequence of Schizosaccharomyces pombe.</title>
        <authorList>
            <person name="Wood V."/>
            <person name="Gwilliam R."/>
            <person name="Rajandream M.A."/>
            <person name="Lyne M.H."/>
            <person name="Lyne R."/>
            <person name="Stewart A."/>
            <person name="Sgouros J.G."/>
            <person name="Peat N."/>
            <person name="Hayles J."/>
            <person name="Baker S.G."/>
            <person name="Basham D."/>
            <person name="Bowman S."/>
            <person name="Brooks K."/>
            <person name="Brown D."/>
            <person name="Brown S."/>
            <person name="Chillingworth T."/>
            <person name="Churcher C.M."/>
            <person name="Collins M."/>
            <person name="Connor R."/>
            <person name="Cronin A."/>
            <person name="Davis P."/>
            <person name="Feltwell T."/>
            <person name="Fraser A."/>
            <person name="Gentles S."/>
            <person name="Goble A."/>
            <person name="Hamlin N."/>
            <person name="Harris D.E."/>
            <person name="Hidalgo J."/>
            <person name="Hodgson G."/>
            <person name="Holroyd S."/>
            <person name="Hornsby T."/>
            <person name="Howarth S."/>
            <person name="Huckle E.J."/>
            <person name="Hunt S."/>
            <person name="Jagels K."/>
            <person name="James K.D."/>
            <person name="Jones L."/>
            <person name="Jones M."/>
            <person name="Leather S."/>
            <person name="McDonald S."/>
            <person name="McLean J."/>
            <person name="Mooney P."/>
            <person name="Moule S."/>
            <person name="Mungall K.L."/>
            <person name="Murphy L.D."/>
            <person name="Niblett D."/>
            <person name="Odell C."/>
            <person name="Oliver K."/>
            <person name="O'Neil S."/>
            <person name="Pearson D."/>
            <person name="Quail M.A."/>
            <person name="Rabbinowitsch E."/>
            <person name="Rutherford K.M."/>
            <person name="Rutter S."/>
            <person name="Saunders D."/>
            <person name="Seeger K."/>
            <person name="Sharp S."/>
            <person name="Skelton J."/>
            <person name="Simmonds M.N."/>
            <person name="Squares R."/>
            <person name="Squares S."/>
            <person name="Stevens K."/>
            <person name="Taylor K."/>
            <person name="Taylor R.G."/>
            <person name="Tivey A."/>
            <person name="Walsh S.V."/>
            <person name="Warren T."/>
            <person name="Whitehead S."/>
            <person name="Woodward J.R."/>
            <person name="Volckaert G."/>
            <person name="Aert R."/>
            <person name="Robben J."/>
            <person name="Grymonprez B."/>
            <person name="Weltjens I."/>
            <person name="Vanstreels E."/>
            <person name="Rieger M."/>
            <person name="Schaefer M."/>
            <person name="Mueller-Auer S."/>
            <person name="Gabel C."/>
            <person name="Fuchs M."/>
            <person name="Duesterhoeft A."/>
            <person name="Fritzc C."/>
            <person name="Holzer E."/>
            <person name="Moestl D."/>
            <person name="Hilbert H."/>
            <person name="Borzym K."/>
            <person name="Langer I."/>
            <person name="Beck A."/>
            <person name="Lehrach H."/>
            <person name="Reinhardt R."/>
            <person name="Pohl T.M."/>
            <person name="Eger P."/>
            <person name="Zimmermann W."/>
            <person name="Wedler H."/>
            <person name="Wambutt R."/>
            <person name="Purnelle B."/>
            <person name="Goffeau A."/>
            <person name="Cadieu E."/>
            <person name="Dreano S."/>
            <person name="Gloux S."/>
            <person name="Lelaure V."/>
            <person name="Mottier S."/>
            <person name="Galibert F."/>
            <person name="Aves S.J."/>
            <person name="Xiang Z."/>
            <person name="Hunt C."/>
            <person name="Moore K."/>
            <person name="Hurst S.M."/>
            <person name="Lucas M."/>
            <person name="Rochet M."/>
            <person name="Gaillardin C."/>
            <person name="Tallada V.A."/>
            <person name="Garzon A."/>
            <person name="Thode G."/>
            <person name="Daga R.R."/>
            <person name="Cruzado L."/>
            <person name="Jimenez J."/>
            <person name="Sanchez M."/>
            <person name="del Rey F."/>
            <person name="Benito J."/>
            <person name="Dominguez A."/>
            <person name="Revuelta J.L."/>
            <person name="Moreno S."/>
            <person name="Armstrong J."/>
            <person name="Forsburg S.L."/>
            <person name="Cerutti L."/>
            <person name="Lowe T."/>
            <person name="McCombie W.R."/>
            <person name="Paulsen I."/>
            <person name="Potashkin J."/>
            <person name="Shpakovski G.V."/>
            <person name="Ussery D."/>
            <person name="Barrell B.G."/>
            <person name="Nurse P."/>
        </authorList>
    </citation>
    <scope>NUCLEOTIDE SEQUENCE [LARGE SCALE GENOMIC DNA]</scope>
    <source>
        <strain>972 / ATCC 24843</strain>
    </source>
</reference>
<reference key="2">
    <citation type="journal article" date="2006" name="EMBO J.">
        <title>Sws1 is a conserved regulator of homologous recombination in eukaryotic cells.</title>
        <authorList>
            <person name="Martin V."/>
            <person name="Chahwan C."/>
            <person name="Gao H."/>
            <person name="Blais V."/>
            <person name="Wohlschlegel J."/>
            <person name="Yates J.R. III"/>
            <person name="McGowan C.H."/>
            <person name="Russell P."/>
        </authorList>
    </citation>
    <scope>FUNCTION</scope>
    <scope>INTERACTION WITH RLP1 AND SWS1</scope>
    <scope>SUBCELLULAR LOCATION</scope>
</reference>
<reference key="3">
    <citation type="journal article" date="2006" name="Nat. Biotechnol.">
        <title>ORFeome cloning and global analysis of protein localization in the fission yeast Schizosaccharomyces pombe.</title>
        <authorList>
            <person name="Matsuyama A."/>
            <person name="Arai R."/>
            <person name="Yashiroda Y."/>
            <person name="Shirai A."/>
            <person name="Kamata A."/>
            <person name="Sekido S."/>
            <person name="Kobayashi Y."/>
            <person name="Hashimoto A."/>
            <person name="Hamamoto M."/>
            <person name="Hiraoka Y."/>
            <person name="Horinouchi S."/>
            <person name="Yoshida M."/>
        </authorList>
    </citation>
    <scope>SUBCELLULAR LOCATION [LARGE SCALE ANALYSIS]</scope>
</reference>
<organism>
    <name type="scientific">Schizosaccharomyces pombe (strain 972 / ATCC 24843)</name>
    <name type="common">Fission yeast</name>
    <dbReference type="NCBI Taxonomy" id="284812"/>
    <lineage>
        <taxon>Eukaryota</taxon>
        <taxon>Fungi</taxon>
        <taxon>Dikarya</taxon>
        <taxon>Ascomycota</taxon>
        <taxon>Taphrinomycotina</taxon>
        <taxon>Schizosaccharomycetes</taxon>
        <taxon>Schizosaccharomycetales</taxon>
        <taxon>Schizosaccharomycetaceae</taxon>
        <taxon>Schizosaccharomyces</taxon>
    </lineage>
</organism>
<evidence type="ECO:0000269" key="1">
    <source>
    </source>
</evidence>
<gene>
    <name type="primary">rdl1</name>
    <name type="ORF">SPAC17H9.03c</name>
</gene>
<feature type="chain" id="PRO_0000116688" description="DNA repair protein rdl1">
    <location>
        <begin position="1"/>
        <end position="230"/>
    </location>
</feature>
<keyword id="KW-0963">Cytoplasm</keyword>
<keyword id="KW-0539">Nucleus</keyword>
<keyword id="KW-1185">Reference proteome</keyword>
<sequence>MNQVTQFSGNSANLMLYWILKSYYSRFDRIMWIDTLGTFNPAALPLPCLEKTMLVRSFDAQGLKDAVDELESNLKSSEDQAYALCIDSFSNPIGLLMAQGNISFAHAFMMTLGRKCRILTRKFRLAVYLSTSLVYIKQLHLSKPALGNSWPFCLDHSYILEDQQHNKCLVHCNQSRKDLLGCSQLFLLLKGSFTHEYLTIDFYNGTPVSVSSKLHVSPSLYHSSTLNSPS</sequence>
<name>RDL1_SCHPO</name>
<protein>
    <recommendedName>
        <fullName>DNA repair protein rdl1</fullName>
    </recommendedName>
    <alternativeName>
        <fullName>RAD51D-like protein 1</fullName>
    </alternativeName>
</protein>
<comment type="function">
    <text evidence="1">Involved in homologous recombination where it functions at an early stage of recombination in a pre-recombinogenic complex with rlp1 and sws1. Also has a role at a later stage of recombination in association with the rhp55-rhp57 complex.</text>
</comment>
<comment type="subunit">
    <text evidence="1">Interacts with rlp1 and sws1.</text>
</comment>
<comment type="interaction">
    <interactant intactId="EBI-8527164">
        <id>O13800</id>
    </interactant>
    <interactant intactId="EBI-8527040">
        <id>O13600</id>
        <label>sws1</label>
    </interactant>
    <organismsDiffer>false</organismsDiffer>
    <experiments>2</experiments>
</comment>
<comment type="subcellular location">
    <subcellularLocation>
        <location>Cytoplasm</location>
    </subcellularLocation>
    <subcellularLocation>
        <location>Nucleus</location>
    </subcellularLocation>
</comment>